<feature type="signal peptide" evidence="1">
    <location>
        <begin position="1"/>
        <end position="23"/>
    </location>
</feature>
<feature type="propeptide" id="PRO_0000343847">
    <location>
        <begin position="24"/>
        <end position="44"/>
    </location>
</feature>
<feature type="peptide" id="PRO_0000343848" description="Myomodulin-C">
    <location>
        <begin position="45"/>
        <end position="51"/>
    </location>
</feature>
<feature type="peptide" id="PRO_0000343849" description="Myomodulin-E">
    <location>
        <begin position="54"/>
        <end position="60"/>
    </location>
</feature>
<feature type="peptide" id="PRO_0000343850" description="MMG2-DPa">
    <location>
        <begin position="64"/>
        <end position="81"/>
    </location>
</feature>
<feature type="propeptide" id="PRO_0000343851" description="Connecting peptide">
    <location>
        <begin position="72"/>
        <end position="81"/>
    </location>
</feature>
<feature type="propeptide" id="PRO_0000343852" description="Connecting peptide">
    <location>
        <begin position="84"/>
        <end position="112"/>
    </location>
</feature>
<feature type="peptide" id="PRO_0000343853" description="MMG2-DPb">
    <location>
        <begin position="115"/>
        <end position="121"/>
    </location>
</feature>
<feature type="propeptide" id="PRO_0000343854" description="Connecting peptide">
    <location>
        <begin position="124"/>
        <end position="168"/>
    </location>
</feature>
<feature type="propeptide" id="PRO_0000343855" description="Connecting peptide">
    <location>
        <begin position="124"/>
        <end position="149"/>
    </location>
</feature>
<feature type="propeptide" id="PRO_0000343856" description="Connecting peptide">
    <location>
        <begin position="124"/>
        <end position="148"/>
    </location>
</feature>
<feature type="propeptide" id="PRO_0000343857" description="Connecting peptide">
    <location>
        <begin position="124"/>
        <end position="147"/>
    </location>
</feature>
<feature type="propeptide" id="PRO_0000343858" description="Connecting peptide">
    <location>
        <begin position="131"/>
        <end position="168"/>
    </location>
</feature>
<feature type="propeptide" id="PRO_0000343859" description="Connecting peptide">
    <location>
        <begin position="149"/>
        <end position="168"/>
    </location>
</feature>
<feature type="propeptide" id="PRO_0000343860" description="Connecting peptide">
    <location>
        <begin position="150"/>
        <end position="168"/>
    </location>
</feature>
<feature type="propeptide" id="PRO_0000343861" description="Connecting peptide">
    <location>
        <begin position="151"/>
        <end position="168"/>
    </location>
</feature>
<feature type="propeptide" id="PRO_0000343862" description="Connecting peptide">
    <location>
        <begin position="171"/>
        <end position="199"/>
    </location>
</feature>
<feature type="propeptide" id="PRO_0000343863" description="Connecting peptide">
    <location>
        <begin position="171"/>
        <end position="190"/>
    </location>
</feature>
<feature type="peptide" id="PRO_0000343864" description="MMG2-DPd">
    <location>
        <begin position="201"/>
        <end position="207"/>
    </location>
</feature>
<feature type="propeptide" id="PRO_0000343865">
    <location>
        <begin position="210"/>
        <end position="219"/>
    </location>
</feature>
<feature type="peptide" id="PRO_0000343866" description="MMG2-DPf">
    <location>
        <begin position="220"/>
        <end position="226"/>
    </location>
</feature>
<feature type="propeptide" id="PRO_0000343867">
    <location>
        <begin position="227"/>
        <end position="240"/>
    </location>
</feature>
<feature type="region of interest" description="Disordered" evidence="2">
    <location>
        <begin position="23"/>
        <end position="44"/>
    </location>
</feature>
<feature type="region of interest" description="Disordered" evidence="2">
    <location>
        <begin position="212"/>
        <end position="240"/>
    </location>
</feature>
<feature type="compositionally biased region" description="Polar residues" evidence="2">
    <location>
        <begin position="26"/>
        <end position="41"/>
    </location>
</feature>
<feature type="compositionally biased region" description="Basic and acidic residues" evidence="2">
    <location>
        <begin position="227"/>
        <end position="240"/>
    </location>
</feature>
<feature type="modified residue" description="Leucine amide" evidence="3">
    <location>
        <position position="51"/>
    </location>
</feature>
<feature type="modified residue" description="Leucine amide" evidence="3">
    <location>
        <position position="60"/>
    </location>
</feature>
<feature type="modified residue" description="Alanine amide" evidence="3">
    <location>
        <position position="81"/>
    </location>
</feature>
<feature type="modified residue" description="Pyrrolidone carboxylic acid" evidence="3">
    <location>
        <position position="115"/>
    </location>
</feature>
<feature type="modified residue" description="Tyrosine amide" evidence="3">
    <location>
        <position position="121"/>
    </location>
</feature>
<feature type="modified residue" description="Isoleucine amide" evidence="3">
    <location>
        <position position="207"/>
    </location>
</feature>
<feature type="modified residue" description="Isoleucine amide" evidence="3">
    <location>
        <position position="226"/>
    </location>
</feature>
<comment type="function">
    <text evidence="3">MMG2-DPs (Myomodulin gene 2-derived peptides) bias egestive feeding programs toward ingestive ones, and modulate accessory radula closer (ARC) muscle contractions.</text>
</comment>
<comment type="subcellular location">
    <subcellularLocation>
        <location evidence="3">Secreted</location>
    </subcellularLocation>
</comment>
<comment type="tissue specificity">
    <text>Expressed in the pedal-buccal projection neurons in the pedal ganglion.</text>
</comment>
<comment type="mass spectrometry">
    <molecule>Myomodulin-C</molecule>
</comment>
<comment type="mass spectrometry">
    <molecule>Myomodulin-E</molecule>
</comment>
<comment type="mass spectrometry">
    <molecule>MMG2-DPa</molecule>
</comment>
<comment type="mass spectrometry">
    <molecule>MMG2-DPb</molecule>
    <text>MMG2-DPb without pyrrolidone carboxylic acid.</text>
</comment>
<comment type="mass spectrometry">
    <molecule>MMG2-DPb</molecule>
    <text>MMG2-DPb with pyrrolidone carboxylic acid.</text>
</comment>
<comment type="mass spectrometry">
    <molecule>MMG2-DPd</molecule>
</comment>
<comment type="mass spectrometry">
    <molecule>MMG2-DPf</molecule>
</comment>
<accession>Q2VF17</accession>
<sequence>MWKILETCSCFLVVAVLSGLGKAQPESFSGSAVTDDSTSGANKRGWSMLRLGRGLQMLRLGKRGGSLDALRSGHQVPMLRAGRGSPDTSGRLDANELYAVLSAILDEPRDQSRRQPPLPRYGRDNNGVARDLLDALASDGESSSNFDLLSSLNNGPSYFRPAPRGGRYKRSLPDAGPADYPSLEDYLVQSRQFARPYSSRAVALPRIGRFSGSPRLQAKAVPRPRIGRQESQMREAKSAE</sequence>
<evidence type="ECO:0000255" key="1"/>
<evidence type="ECO:0000256" key="2">
    <source>
        <dbReference type="SAM" id="MobiDB-lite"/>
    </source>
</evidence>
<evidence type="ECO:0000269" key="3">
    <source>
    </source>
</evidence>
<evidence type="ECO:0000269" key="4">
    <source>
    </source>
</evidence>
<reference key="1">
    <citation type="journal article" date="2005" name="J. Neurosci.">
        <title>Identification of a new neuropeptide precursor reveals a novel source of extrinsic modulation in the feeding system of Aplysia.</title>
        <authorList>
            <person name="Proekt A."/>
            <person name="Vilim F.S."/>
            <person name="Alexeeva V."/>
            <person name="Brezina V."/>
            <person name="Friedman A."/>
            <person name="Jing J."/>
            <person name="Li L."/>
            <person name="Zhurov Y."/>
            <person name="Sweedler J.V."/>
            <person name="Weiss K.R."/>
        </authorList>
    </citation>
    <scope>NUCLEOTIDE SEQUENCE [MRNA]</scope>
    <scope>FUNCTION</scope>
    <scope>PROTEOLYTIC PROCESSING</scope>
    <scope>SUBCELLULAR LOCATION</scope>
    <scope>PYROGLUTAMATE FORMATION AT GLN-115</scope>
    <scope>AMIDATION AT LEU-51; LEU-60; ALA-81; TYR-121; ILE-207 AND ILE-226</scope>
    <scope>MASS SPECTROMETRY</scope>
</reference>
<reference key="2">
    <citation type="journal article" date="1998" name="Peptides">
        <title>Mass spectrometric survey of interganglionically transported peptides in Aplysia.</title>
        <authorList>
            <person name="Li L."/>
            <person name="Moroz T.P."/>
            <person name="Garden R.W."/>
            <person name="Floyd P.D."/>
            <person name="Weiss K.R."/>
            <person name="Sweedler J.V."/>
        </authorList>
    </citation>
    <scope>MASS SPECTROMETRY</scope>
</reference>
<proteinExistence type="evidence at protein level"/>
<gene>
    <name type="primary">MMG2</name>
</gene>
<protein>
    <recommendedName>
        <fullName>Myomodulin neuropeptides 2</fullName>
    </recommendedName>
    <component>
        <recommendedName>
            <fullName>Myomodulin-C</fullName>
            <shortName>MM-C</shortName>
            <shortName>MMc</shortName>
        </recommendedName>
    </component>
    <component>
        <recommendedName>
            <fullName>Myomodulin-E</fullName>
            <shortName>MM-E</shortName>
            <shortName>MMe</shortName>
        </recommendedName>
    </component>
    <component>
        <recommendedName>
            <fullName>MMG2-DPa</fullName>
        </recommendedName>
    </component>
    <component>
        <recommendedName>
            <fullName>MMG2-DPb</fullName>
        </recommendedName>
    </component>
    <component>
        <recommendedName>
            <fullName>MMG2-DPd</fullName>
        </recommendedName>
    </component>
    <component>
        <recommendedName>
            <fullName>MMG2-DPf</fullName>
        </recommendedName>
    </component>
</protein>
<name>MYOM2_APLCA</name>
<keyword id="KW-0027">Amidation</keyword>
<keyword id="KW-0165">Cleavage on pair of basic residues</keyword>
<keyword id="KW-0527">Neuropeptide</keyword>
<keyword id="KW-0873">Pyrrolidone carboxylic acid</keyword>
<keyword id="KW-0964">Secreted</keyword>
<keyword id="KW-0732">Signal</keyword>
<organism>
    <name type="scientific">Aplysia californica</name>
    <name type="common">California sea hare</name>
    <dbReference type="NCBI Taxonomy" id="6500"/>
    <lineage>
        <taxon>Eukaryota</taxon>
        <taxon>Metazoa</taxon>
        <taxon>Spiralia</taxon>
        <taxon>Lophotrochozoa</taxon>
        <taxon>Mollusca</taxon>
        <taxon>Gastropoda</taxon>
        <taxon>Heterobranchia</taxon>
        <taxon>Euthyneura</taxon>
        <taxon>Tectipleura</taxon>
        <taxon>Aplysiida</taxon>
        <taxon>Aplysioidea</taxon>
        <taxon>Aplysiidae</taxon>
        <taxon>Aplysia</taxon>
    </lineage>
</organism>
<dbReference type="EMBL" id="DQ186993">
    <property type="protein sequence ID" value="ABA70768.1"/>
    <property type="molecule type" value="mRNA"/>
</dbReference>
<dbReference type="RefSeq" id="NP_001191658.1">
    <property type="nucleotide sequence ID" value="NM_001204729.1"/>
</dbReference>
<dbReference type="EnsemblMetazoa" id="NM_001204729.1">
    <property type="protein sequence ID" value="NP_001191658.1"/>
    <property type="gene ID" value="LOC100533452"/>
</dbReference>
<dbReference type="GeneID" id="100533452"/>
<dbReference type="OrthoDB" id="6120461at2759"/>
<dbReference type="Proteomes" id="UP000694888">
    <property type="component" value="Unplaced"/>
</dbReference>
<dbReference type="GO" id="GO:0005576">
    <property type="term" value="C:extracellular region"/>
    <property type="evidence" value="ECO:0007669"/>
    <property type="project" value="UniProtKB-SubCell"/>
</dbReference>
<dbReference type="GO" id="GO:0007218">
    <property type="term" value="P:neuropeptide signaling pathway"/>
    <property type="evidence" value="ECO:0007669"/>
    <property type="project" value="UniProtKB-KW"/>
</dbReference>